<gene>
    <name evidence="1" type="primary">rps11</name>
</gene>
<accession>P48136</accession>
<dbReference type="EMBL" id="U30821">
    <property type="protein sequence ID" value="AAA81288.1"/>
    <property type="molecule type" value="Genomic_DNA"/>
</dbReference>
<dbReference type="PIR" id="T06945">
    <property type="entry name" value="T06945"/>
</dbReference>
<dbReference type="RefSeq" id="NP_043257.1">
    <property type="nucleotide sequence ID" value="NC_001675.1"/>
</dbReference>
<dbReference type="SMR" id="P48136"/>
<dbReference type="GeneID" id="801679"/>
<dbReference type="GO" id="GO:0009842">
    <property type="term" value="C:cyanelle"/>
    <property type="evidence" value="ECO:0007669"/>
    <property type="project" value="UniProtKB-SubCell"/>
</dbReference>
<dbReference type="GO" id="GO:1990904">
    <property type="term" value="C:ribonucleoprotein complex"/>
    <property type="evidence" value="ECO:0007669"/>
    <property type="project" value="UniProtKB-KW"/>
</dbReference>
<dbReference type="GO" id="GO:0005840">
    <property type="term" value="C:ribosome"/>
    <property type="evidence" value="ECO:0007669"/>
    <property type="project" value="UniProtKB-KW"/>
</dbReference>
<dbReference type="GO" id="GO:0019843">
    <property type="term" value="F:rRNA binding"/>
    <property type="evidence" value="ECO:0007669"/>
    <property type="project" value="UniProtKB-KW"/>
</dbReference>
<dbReference type="GO" id="GO:0003735">
    <property type="term" value="F:structural constituent of ribosome"/>
    <property type="evidence" value="ECO:0007669"/>
    <property type="project" value="InterPro"/>
</dbReference>
<dbReference type="GO" id="GO:0006412">
    <property type="term" value="P:translation"/>
    <property type="evidence" value="ECO:0007669"/>
    <property type="project" value="InterPro"/>
</dbReference>
<dbReference type="FunFam" id="3.30.420.80:FF:000001">
    <property type="entry name" value="30S ribosomal protein S11"/>
    <property type="match status" value="1"/>
</dbReference>
<dbReference type="Gene3D" id="3.30.420.80">
    <property type="entry name" value="Ribosomal protein S11"/>
    <property type="match status" value="1"/>
</dbReference>
<dbReference type="HAMAP" id="MF_01310">
    <property type="entry name" value="Ribosomal_uS11"/>
    <property type="match status" value="1"/>
</dbReference>
<dbReference type="InterPro" id="IPR001971">
    <property type="entry name" value="Ribosomal_uS11"/>
</dbReference>
<dbReference type="InterPro" id="IPR019981">
    <property type="entry name" value="Ribosomal_uS11_bac-type"/>
</dbReference>
<dbReference type="InterPro" id="IPR018102">
    <property type="entry name" value="Ribosomal_uS11_CS"/>
</dbReference>
<dbReference type="InterPro" id="IPR036967">
    <property type="entry name" value="Ribosomal_uS11_sf"/>
</dbReference>
<dbReference type="NCBIfam" id="NF003698">
    <property type="entry name" value="PRK05309.1"/>
    <property type="match status" value="1"/>
</dbReference>
<dbReference type="NCBIfam" id="TIGR03632">
    <property type="entry name" value="uS11_bact"/>
    <property type="match status" value="1"/>
</dbReference>
<dbReference type="PANTHER" id="PTHR11759">
    <property type="entry name" value="40S RIBOSOMAL PROTEIN S14/30S RIBOSOMAL PROTEIN S11"/>
    <property type="match status" value="1"/>
</dbReference>
<dbReference type="Pfam" id="PF00411">
    <property type="entry name" value="Ribosomal_S11"/>
    <property type="match status" value="1"/>
</dbReference>
<dbReference type="PIRSF" id="PIRSF002131">
    <property type="entry name" value="Ribosomal_S11"/>
    <property type="match status" value="1"/>
</dbReference>
<dbReference type="SUPFAM" id="SSF53137">
    <property type="entry name" value="Translational machinery components"/>
    <property type="match status" value="1"/>
</dbReference>
<dbReference type="PROSITE" id="PS00054">
    <property type="entry name" value="RIBOSOMAL_S11"/>
    <property type="match status" value="1"/>
</dbReference>
<evidence type="ECO:0000255" key="1">
    <source>
        <dbReference type="HAMAP-Rule" id="MF_01310"/>
    </source>
</evidence>
<evidence type="ECO:0000305" key="2"/>
<reference key="1">
    <citation type="journal article" date="1995" name="Plant Mol. Biol. Rep.">
        <title>Nucleotide sequence of the cyanelle DNA from Cyanophora paradoxa.</title>
        <authorList>
            <person name="Stirewalt V.L."/>
            <person name="Michalowski C.B."/>
            <person name="Loeffelhardt W."/>
            <person name="Bohnert H.J."/>
            <person name="Bryant D.A."/>
        </authorList>
    </citation>
    <scope>NUCLEOTIDE SEQUENCE [LARGE SCALE GENOMIC DNA]</scope>
    <source>
        <strain>UTEX LB 555 / Pringsheim</strain>
    </source>
</reference>
<reference key="2">
    <citation type="book" date="1997" name="Eukaryotism and symbiosis">
        <title>The complete sequence of the cyanelle genome of Cyanophora paradoxa: the genetic complexity of a primitive plastid.</title>
        <editorList>
            <person name="Schenk H.E.A."/>
            <person name="Herrmann R."/>
            <person name="Jeon K.W."/>
            <person name="Mueller N.E."/>
            <person name="Schwemmler W."/>
        </editorList>
        <authorList>
            <person name="Loeffelhardt W."/>
            <person name="Stirewalt V.L."/>
            <person name="Michalowski C.B."/>
            <person name="Annarella M."/>
            <person name="Farley J.Y."/>
            <person name="Schluchter W.M."/>
            <person name="Chung S."/>
            <person name="Newmann-Spallart C."/>
            <person name="Steiner J.M."/>
            <person name="Jakowitsch J."/>
            <person name="Bohnert H.J."/>
            <person name="Bryant D.A."/>
        </authorList>
    </citation>
    <scope>NUCLEOTIDE SEQUENCE [LARGE SCALE GENOMIC DNA]</scope>
    <source>
        <strain>UTEX LB 555 / Pringsheim</strain>
    </source>
</reference>
<sequence>MARQIKRSGTTKQKKNIPVGVAHIQSTFNNTIISITSPTGEVIAWASAGSSGFKGARKGTPFAAQTAAENSARQAMEQGMRQIEVIISGPGSGREMAIKALQATGLEISLIRDITPVPHNGCRPPKRRRV</sequence>
<geneLocation type="cyanelle"/>
<name>RR11_CYAPA</name>
<protein>
    <recommendedName>
        <fullName evidence="2">Small ribosomal subunit protein uS11c</fullName>
    </recommendedName>
    <alternativeName>
        <fullName>Cyanelle 30S ribosomal protein S11</fullName>
    </alternativeName>
</protein>
<comment type="subunit">
    <text evidence="1">Part of the 30S ribosomal subunit.</text>
</comment>
<comment type="subcellular location">
    <subcellularLocation>
        <location>Plastid</location>
        <location>Cyanelle</location>
    </subcellularLocation>
</comment>
<comment type="similarity">
    <text evidence="1">Belongs to the universal ribosomal protein uS11 family.</text>
</comment>
<proteinExistence type="inferred from homology"/>
<organism>
    <name type="scientific">Cyanophora paradoxa</name>
    <dbReference type="NCBI Taxonomy" id="2762"/>
    <lineage>
        <taxon>Eukaryota</taxon>
        <taxon>Glaucocystophyceae</taxon>
        <taxon>Cyanophoraceae</taxon>
        <taxon>Cyanophora</taxon>
    </lineage>
</organism>
<feature type="chain" id="PRO_0000123299" description="Small ribosomal subunit protein uS11c">
    <location>
        <begin position="1"/>
        <end position="130"/>
    </location>
</feature>
<keyword id="KW-0194">Cyanelle</keyword>
<keyword id="KW-0934">Plastid</keyword>
<keyword id="KW-0687">Ribonucleoprotein</keyword>
<keyword id="KW-0689">Ribosomal protein</keyword>
<keyword id="KW-0694">RNA-binding</keyword>
<keyword id="KW-0699">rRNA-binding</keyword>